<comment type="function">
    <text evidence="3 7 9 10 12 16">The small GTPases Rab are key regulators of intracellular membrane trafficking, from the formation of transport vesicles to their fusion with membranes. Rabs cycle between an inactive GDP-bound form and an active GTP-bound form that is able to recruit to membranes different set of downstream effectors directly responsible for vesicle formation, movement, tethering and fusion. YPT1 regulates the trafficking of secretory vesicles from the endoplasmic reticulum (ER) to the Golgi. Vesicular transport depends on shuttling of YPT1 between membrane and cytosol by GDI1, probably by recycling it to its membrane of origin after a vesicle fusion event. Plays a role in the initial events of the autophagic vacuole development which take place at specialized regions of the endoplasmic reticulum. Also involved in the recycling of membrane proteins.</text>
</comment>
<comment type="activity regulation">
    <text evidence="4 5 9 22">Rab activation is generally mediated by a guanine exchange factor (GEF), while inactivation through hydrolysis of bound GTP is catalyzed by a GTPase activating protein (GAP). YPT1 is activated by the GEFs DSS4 and TRAPP complex, and inactivated by GAPs GYP1, GYP5 and GYP8.</text>
</comment>
<comment type="subunit">
    <text evidence="6 8 10 11 20">Forms a complex with the Rab escort protein (REP) MRS6, which is recognized by Rab geranylgeranyltransferase BET2-BET4. Interacts with the Rab GDP dissociation inhibitor GDI1, which can retrieve from and deliver to membranes the GDP-bound and prenylated form of YPT1. Interacts with YIP1, which is required for proper membrane targeting of prenylated YPT1. Interacts with YIF1, YIP3, YIP4 and YIP5.</text>
</comment>
<comment type="interaction">
    <interactant intactId="EBI-29496">
        <id>P01123</id>
    </interactant>
    <interactant intactId="EBI-7517">
        <id>P39958</id>
        <label>GDI1</label>
    </interactant>
    <organismsDiffer>false</organismsDiffer>
    <experiments>7</experiments>
</comment>
<comment type="interaction">
    <interactant intactId="EBI-29496">
        <id>P01123</id>
    </interactant>
    <interactant intactId="EBI-16577">
        <id>P22214</id>
        <label>SEC22</label>
    </interactant>
    <organismsDiffer>false</organismsDiffer>
    <experiments>2</experiments>
</comment>
<comment type="interaction">
    <interactant intactId="EBI-29496">
        <id>P01123</id>
    </interactant>
    <interactant intactId="EBI-16858">
        <id>P07560</id>
        <label>SEC4</label>
    </interactant>
    <organismsDiffer>false</organismsDiffer>
    <experiments>2</experiments>
</comment>
<comment type="interaction">
    <interactant intactId="EBI-29496">
        <id>P01123</id>
    </interactant>
    <interactant intactId="EBI-16930">
        <id>Q01590</id>
        <label>SED5</label>
    </interactant>
    <organismsDiffer>false</organismsDiffer>
    <experiments>3</experiments>
</comment>
<comment type="interaction">
    <interactant intactId="EBI-29496">
        <id>P01123</id>
    </interactant>
    <interactant intactId="EBI-28230">
        <id>P53845</id>
        <label>YIF1</label>
    </interactant>
    <organismsDiffer>false</organismsDiffer>
    <experiments>3</experiments>
</comment>
<comment type="interaction">
    <interactant intactId="EBI-29496">
        <id>P01123</id>
    </interactant>
    <interactant intactId="EBI-25301">
        <id>P53633</id>
        <label>YIP3</label>
    </interactant>
    <organismsDiffer>false</organismsDiffer>
    <experiments>2</experiments>
</comment>
<comment type="interaction">
    <interactant intactId="EBI-29496">
        <id>P01123</id>
    </interactant>
    <interactant intactId="EBI-24124">
        <id>P53093</id>
        <label>YIP4</label>
    </interactant>
    <organismsDiffer>false</organismsDiffer>
    <experiments>2</experiments>
</comment>
<comment type="subcellular location">
    <subcellularLocation>
        <location evidence="10">Endoplasmic reticulum membrane</location>
        <topology evidence="10">Peripheral membrane protein</topology>
    </subcellularLocation>
    <subcellularLocation>
        <location evidence="10">Golgi apparatus membrane</location>
        <topology evidence="10">Peripheral membrane protein</topology>
    </subcellularLocation>
    <subcellularLocation>
        <location evidence="10">Cytoplasm</location>
    </subcellularLocation>
    <subcellularLocation>
        <location evidence="16">Preautophagosomal structure membrane</location>
        <topology evidence="24">Lipid-anchor</topology>
        <orientation evidence="24">Cytoplasmic side</orientation>
    </subcellularLocation>
    <text>ER and Golgi when GTP-bound. Cytoplasmic when bound to GDI1.</text>
</comment>
<comment type="PTM">
    <text evidence="3">Prenylation is required for interaction with GDI1 and YIP1.</text>
</comment>
<comment type="similarity">
    <text evidence="24">Belongs to the small GTPase superfamily. Rab family.</text>
</comment>
<comment type="caution">
    <text evidence="24">In PubMed:3042385 the location of any palmitoylation was not determined. Mutagenesis of either Cys-205 or Cys-206 would disrupt normal geranylgeranylation, and there would be no primary membrane association for secondary S-palmitoylation to occur at some other position, for example Cys-23. Mutagenesis of both Cys-205 and Cys-206 is lethal, so protein production could not have been observed.</text>
</comment>
<protein>
    <recommendedName>
        <fullName>GTP-binding protein YPT1</fullName>
    </recommendedName>
    <alternativeName>
        <fullName>Protein YP2</fullName>
    </alternativeName>
    <alternativeName>
        <fullName>Rab GTPase YPT1</fullName>
    </alternativeName>
    <alternativeName>
        <fullName>Transport GTPase YPT1</fullName>
    </alternativeName>
</protein>
<gene>
    <name type="primary">YPT1</name>
    <name type="synonym">YP2</name>
    <name type="ordered locus">YFL038C</name>
</gene>
<keyword id="KW-0002">3D-structure</keyword>
<keyword id="KW-0007">Acetylation</keyword>
<keyword id="KW-0072">Autophagy</keyword>
<keyword id="KW-0963">Cytoplasm</keyword>
<keyword id="KW-0903">Direct protein sequencing</keyword>
<keyword id="KW-0256">Endoplasmic reticulum</keyword>
<keyword id="KW-0931">ER-Golgi transport</keyword>
<keyword id="KW-0333">Golgi apparatus</keyword>
<keyword id="KW-0342">GTP-binding</keyword>
<keyword id="KW-1017">Isopeptide bond</keyword>
<keyword id="KW-0449">Lipoprotein</keyword>
<keyword id="KW-0472">Membrane</keyword>
<keyword id="KW-0547">Nucleotide-binding</keyword>
<keyword id="KW-0564">Palmitate</keyword>
<keyword id="KW-0597">Phosphoprotein</keyword>
<keyword id="KW-0636">Prenylation</keyword>
<keyword id="KW-0653">Protein transport</keyword>
<keyword id="KW-1185">Reference proteome</keyword>
<keyword id="KW-0813">Transport</keyword>
<keyword id="KW-0832">Ubl conjugation</keyword>
<reference key="1">
    <citation type="journal article" date="1983" name="Nature">
        <title>A yeast gene encoding a protein homologous to the human c-has/bas proto-oncogene product.</title>
        <authorList>
            <person name="Gallwitz D."/>
            <person name="Donath C."/>
            <person name="Sander C."/>
        </authorList>
    </citation>
    <scope>NUCLEOTIDE SEQUENCE [GENOMIC DNA]</scope>
</reference>
<reference key="2">
    <citation type="journal article" date="1995" name="Nat. Genet.">
        <title>Analysis of the nucleotide sequence of chromosome VI from Saccharomyces cerevisiae.</title>
        <authorList>
            <person name="Murakami Y."/>
            <person name="Naitou M."/>
            <person name="Hagiwara H."/>
            <person name="Shibata T."/>
            <person name="Ozawa M."/>
            <person name="Sasanuma S."/>
            <person name="Sasanuma M."/>
            <person name="Tsuchiya Y."/>
            <person name="Soeda E."/>
            <person name="Yokoyama K."/>
            <person name="Yamazaki M."/>
            <person name="Tashiro H."/>
            <person name="Eki T."/>
        </authorList>
    </citation>
    <scope>NUCLEOTIDE SEQUENCE [LARGE SCALE GENOMIC DNA]</scope>
    <source>
        <strain>ATCC 204508 / S288c</strain>
    </source>
</reference>
<reference key="3">
    <citation type="journal article" date="2014" name="G3 (Bethesda)">
        <title>The reference genome sequence of Saccharomyces cerevisiae: Then and now.</title>
        <authorList>
            <person name="Engel S.R."/>
            <person name="Dietrich F.S."/>
            <person name="Fisk D.G."/>
            <person name="Binkley G."/>
            <person name="Balakrishnan R."/>
            <person name="Costanzo M.C."/>
            <person name="Dwight S.S."/>
            <person name="Hitz B.C."/>
            <person name="Karra K."/>
            <person name="Nash R.S."/>
            <person name="Weng S."/>
            <person name="Wong E.D."/>
            <person name="Lloyd P."/>
            <person name="Skrzypek M.S."/>
            <person name="Miyasato S.R."/>
            <person name="Simison M."/>
            <person name="Cherry J.M."/>
        </authorList>
    </citation>
    <scope>GENOME REANNOTATION</scope>
    <source>
        <strain>ATCC 204508 / S288c</strain>
    </source>
</reference>
<reference key="4">
    <citation type="journal article" date="2007" name="Genome Res.">
        <title>Approaching a complete repository of sequence-verified protein-encoding clones for Saccharomyces cerevisiae.</title>
        <authorList>
            <person name="Hu Y."/>
            <person name="Rolfs A."/>
            <person name="Bhullar B."/>
            <person name="Murthy T.V.S."/>
            <person name="Zhu C."/>
            <person name="Berger M.F."/>
            <person name="Camargo A.A."/>
            <person name="Kelley F."/>
            <person name="McCarron S."/>
            <person name="Jepson D."/>
            <person name="Richardson A."/>
            <person name="Raphael J."/>
            <person name="Moreira D."/>
            <person name="Taycher E."/>
            <person name="Zuo D."/>
            <person name="Mohr S."/>
            <person name="Kane M.F."/>
            <person name="Williamson J."/>
            <person name="Simpson A.J.G."/>
            <person name="Bulyk M.L."/>
            <person name="Harlow E."/>
            <person name="Marsischky G."/>
            <person name="Kolodner R.D."/>
            <person name="LaBaer J."/>
        </authorList>
    </citation>
    <scope>NUCLEOTIDE SEQUENCE [GENOMIC DNA]</scope>
    <source>
        <strain>ATCC 204508 / S288c</strain>
    </source>
</reference>
<reference key="5">
    <citation type="submission" date="2005-05" db="UniProtKB">
        <authorList>
            <person name="Bienvenut W.V."/>
            <person name="Peters C."/>
        </authorList>
    </citation>
    <scope>PROTEIN SEQUENCE OF 1-46; 49-55; 59-69; 72-79; 101-116 AND 130-167</scope>
    <scope>CLEAVAGE OF INITIATOR METHIONINE</scope>
    <scope>ACETYLATION AT MET-1</scope>
    <scope>IDENTIFICATION BY MASS SPECTROMETRY</scope>
</reference>
<reference key="6">
    <citation type="journal article" date="1987" name="EMBO J.">
        <title>Biochemical properties of the ras-related YPT protein in yeast: a mutational analysis.</title>
        <authorList>
            <person name="Wagner P."/>
            <person name="Molenaar C.M.T."/>
            <person name="Rauh A.J.G."/>
            <person name="Broekel R."/>
            <person name="Schmitt H.D."/>
            <person name="Gallwitz D."/>
        </authorList>
    </citation>
    <scope>MUTAGENESIS OF SER-17; LYS-21; ALA-65 AND ASN-121</scope>
</reference>
<reference key="7">
    <citation type="journal article" date="1988" name="EMBO J.">
        <title>A carboxyl-terminal cysteine residue is required for palmitic acid binding and biological activity of the ras-related yeast YPT1 protein.</title>
        <authorList>
            <person name="Molenaar C.M.T."/>
            <person name="Prange R."/>
            <person name="Gallwitz D."/>
        </authorList>
    </citation>
    <scope>PALMITOYLATION AT CYS-23 AND CYS-123</scope>
    <scope>MUTAGENESIS OF CYS-205 AND CYS-206</scope>
</reference>
<reference key="8">
    <citation type="journal article" date="1988" name="Cell">
        <title>Study of a temperature-sensitive mutant of the ras-related YPT1 gene product in yeast suggests a role in the regulation of intracellular calcium.</title>
        <authorList>
            <person name="Schmitt H.D."/>
            <person name="Puzicha M."/>
            <person name="Gallwitz D."/>
        </authorList>
    </citation>
    <scope>MUTAGENESIS</scope>
    <scope>POSSIBLE FUNCTION</scope>
</reference>
<reference key="9">
    <citation type="journal article" date="1991" name="EMBO J.">
        <title>Mutational analysis of the putative effector domain of the GTP-binding Ypt1 protein in yeast suggests specific regulation by a novel GAP activity.</title>
        <authorList>
            <person name="Becker J."/>
            <person name="Tan T.J."/>
            <person name="Trepte H.-H."/>
            <person name="Gallwitz D."/>
        </authorList>
    </citation>
    <scope>MUTAGENESIS OF TYR-37; SER-39; THR-40; ILE-41; VAL-43 AND ASP-44</scope>
</reference>
<reference key="10">
    <citation type="journal article" date="1995" name="J. Cell Biol.">
        <title>The Ypt1 GTPase is essential for the first two steps of the yeast secretory pathway.</title>
        <authorList>
            <person name="Jedd G."/>
            <person name="Richardson C.J."/>
            <person name="Litt R.J."/>
            <person name="Segev N."/>
        </authorList>
    </citation>
    <scope>MUTAGENESIS OF ALA-136</scope>
</reference>
<reference key="11">
    <citation type="journal article" date="1996" name="Mol. Biol. Cell">
        <title>Amino- and carboxy-terminal domains of the yeast Rab escort protein are both required for binding of Ypt small G proteins.</title>
        <authorList>
            <person name="Bauer B.E."/>
            <person name="Lorenzetti S."/>
            <person name="Miaczynska M."/>
            <person name="Bui D.M."/>
            <person name="Schweyen R.J."/>
            <person name="Ragnini A."/>
        </authorList>
    </citation>
    <scope>INTERACTION WITH MRS6</scope>
</reference>
<reference key="12">
    <citation type="journal article" date="1998" name="Mol. Cell. Biol.">
        <title>GTP hydrolysis is not important for Ypt1 GTPase function in vesicular transport.</title>
        <authorList>
            <person name="Richardson C.J."/>
            <person name="Jones S."/>
            <person name="Litt R.J."/>
            <person name="Segev N."/>
        </authorList>
    </citation>
    <scope>MUTAGENESIS OF GLN-67</scope>
</reference>
<reference key="13">
    <citation type="journal article" date="1998" name="Mol. Cell. Biol.">
        <title>Distinct subclasses of small GTPases interact with guanine nucleotide exchange factors in a similar manner.</title>
        <authorList>
            <person name="Day G.-J."/>
            <person name="Mosteller R.D."/>
            <person name="Broek D."/>
        </authorList>
    </citation>
    <scope>ACTIVITY REGULATION</scope>
</reference>
<reference key="14">
    <citation type="journal article" date="1999" name="Mol. Gen. Genet.">
        <title>Functional implications of genetic interactions between genes encoding small GTPases involved in vesicular transport in yeast.</title>
        <authorList>
            <person name="Yoo J.S."/>
            <person name="Grabowski R."/>
            <person name="Xing L."/>
            <person name="Trepte H.H."/>
            <person name="Schmitt H.D."/>
            <person name="Gallwitz D."/>
        </authorList>
    </citation>
    <scope>ISOPRENYLATION AT CYS-205 AND CYS-206</scope>
    <scope>MUTAGENESIS OF CYS-205 AND CYS-206</scope>
    <scope>FUNCTION</scope>
</reference>
<reference key="15">
    <citation type="journal article" date="2000" name="Mol. Biol. Cell">
        <title>The TRAPP complex is a nucleotide exchanger for Ypt1 and Ypt31/32.</title>
        <authorList>
            <person name="Jones S."/>
            <person name="Newman C."/>
            <person name="Liu F."/>
            <person name="Segev N."/>
        </authorList>
    </citation>
    <scope>ACTIVITY REGULATION</scope>
</reference>
<reference key="16">
    <citation type="journal article" date="2001" name="Mol. Biol. Cell">
        <title>Yeast rab GTPase-activating protein Gyp1p localizes to the Golgi apparatus and is a negative regulator of Ypt1p.</title>
        <authorList>
            <person name="Du L.-L."/>
            <person name="Novick P."/>
        </authorList>
    </citation>
    <scope>ACTIVITY REGULATION</scope>
</reference>
<reference key="17">
    <citation type="journal article" date="2002" name="Biochem. Biophys. Res. Commun.">
        <title>Saccharomyces cerevisiae Pra1p/Yip3p interacts with Yip1p and Rab proteins.</title>
        <authorList>
            <person name="Calero M."/>
            <person name="Collins R.N."/>
        </authorList>
    </citation>
    <scope>INTERACTION WITH YIP3</scope>
</reference>
<reference key="18">
    <citation type="journal article" date="2002" name="Dev. Cell">
        <title>The Rab GTPase Ypt1p and tethering factors couple protein sorting at the ER to vesicle targeting to the Golgi apparatus.</title>
        <authorList>
            <person name="Morsomme P."/>
            <person name="Riezman H."/>
        </authorList>
    </citation>
    <scope>FUNCTION</scope>
</reference>
<reference key="19">
    <citation type="journal article" date="2002" name="FEBS Lett.">
        <title>Identification of the novel proteins Yip4p and Yip5p as Rab GTPase interacting factors.</title>
        <authorList>
            <person name="Calero M."/>
            <person name="Winand N.J."/>
            <person name="Collins R.N."/>
        </authorList>
    </citation>
    <scope>INTERACTION WITH YIF1; YIP4 AND YIP5</scope>
</reference>
<reference key="20">
    <citation type="journal article" date="2002" name="J. Biol. Chem.">
        <title>Significance of GTP hydrolysis in Ypt1p-regulated endoplasmic reticulum to Golgi transport revealed by the analysis of two novel Ypt1-GAPs.</title>
        <authorList>
            <person name="De Antoni A."/>
            <person name="Schmitzova J."/>
            <person name="Trepte H.-H."/>
            <person name="Gallwitz D."/>
            <person name="Albert S."/>
        </authorList>
    </citation>
    <scope>FUNCTION</scope>
    <scope>ACTIVITY REGULATION</scope>
</reference>
<reference key="21">
    <citation type="journal article" date="2003" name="Mol. Biol. Cell">
        <title>Dual prenylation is required for Rab protein localization and function.</title>
        <authorList>
            <person name="Calero M."/>
            <person name="Chen C.Z."/>
            <person name="Zhu W."/>
            <person name="Winand N.J."/>
            <person name="Havas K.A."/>
            <person name="Gilbert P.M."/>
            <person name="Burd C.G."/>
            <person name="Collins R.N."/>
        </authorList>
    </citation>
    <scope>FUNCTION</scope>
    <scope>INTERACTION WITH YIP1</scope>
    <scope>SUBCELLULAR LOCATION</scope>
</reference>
<reference key="22">
    <citation type="journal article" date="2004" name="Mol. Cell. Biol.">
        <title>The GTPase-activating enzyme Gyp1p is required for recycling of internalized membrane material by inactivation of the Rab/Ypt GTPase Ypt1p.</title>
        <authorList>
            <person name="Lafourcade C."/>
            <person name="Galan J.-M."/>
            <person name="Gloor Y."/>
            <person name="Haguenauer-Tsapis R."/>
            <person name="Peter M."/>
        </authorList>
    </citation>
    <scope>FUNCTION</scope>
    <scope>MUTAGENESIS OF GLN-67</scope>
</reference>
<reference key="23">
    <citation type="journal article" date="2008" name="Mol. Cell. Proteomics">
        <title>A multidimensional chromatography technology for in-depth phosphoproteome analysis.</title>
        <authorList>
            <person name="Albuquerque C.P."/>
            <person name="Smolka M.B."/>
            <person name="Payne S.H."/>
            <person name="Bafna V."/>
            <person name="Eng J."/>
            <person name="Zhou H."/>
        </authorList>
    </citation>
    <scope>PHOSPHORYLATION [LARGE SCALE ANALYSIS] AT SER-174</scope>
    <scope>IDENTIFICATION BY MASS SPECTROMETRY [LARGE SCALE ANALYSIS]</scope>
</reference>
<reference key="24">
    <citation type="journal article" date="2009" name="Science">
        <title>Global analysis of Cdk1 substrate phosphorylation sites provides insights into evolution.</title>
        <authorList>
            <person name="Holt L.J."/>
            <person name="Tuch B.B."/>
            <person name="Villen J."/>
            <person name="Johnson A.D."/>
            <person name="Gygi S.P."/>
            <person name="Morgan D.O."/>
        </authorList>
    </citation>
    <scope>PHOSPHORYLATION [LARGE SCALE ANALYSIS] AT SER-172</scope>
    <scope>IDENTIFICATION BY MASS SPECTROMETRY [LARGE SCALE ANALYSIS]</scope>
</reference>
<reference key="25">
    <citation type="journal article" date="2010" name="Proc. Natl. Acad. Sci. U.S.A.">
        <title>Trs85 directs a Ypt1 GEF, TRAPPIII, to the phagophore to promote autophagy.</title>
        <authorList>
            <person name="Lynch-Day M.A."/>
            <person name="Bhandari D."/>
            <person name="Menon S."/>
            <person name="Huang J."/>
            <person name="Cai H."/>
            <person name="Bartholomew C.R."/>
            <person name="Brumell J.H."/>
            <person name="Ferro-Novick S."/>
            <person name="Klionsky D.J."/>
        </authorList>
    </citation>
    <scope>FUNCTION</scope>
    <scope>SUBCELLULAR LOCATION</scope>
</reference>
<reference key="26">
    <citation type="journal article" date="2012" name="Proteomics">
        <title>Sites of ubiquitin attachment in Saccharomyces cerevisiae.</title>
        <authorList>
            <person name="Starita L.M."/>
            <person name="Lo R.S."/>
            <person name="Eng J.K."/>
            <person name="von Haller P.D."/>
            <person name="Fields S."/>
        </authorList>
    </citation>
    <scope>UBIQUITINATION [LARGE SCALE ANALYSIS] AT LYS-144</scope>
    <scope>IDENTIFICATION BY MASS SPECTROMETRY [LARGE SCALE ANALYSIS]</scope>
</reference>
<reference key="27">
    <citation type="journal article" date="2003" name="Science">
        <title>Structure of Rab GDP-dissociation inhibitor in complex with prenylated YPT1 GTPase.</title>
        <authorList>
            <person name="Rak A."/>
            <person name="Pylypenko O."/>
            <person name="Durek T."/>
            <person name="Watzke A."/>
            <person name="Kushnir S."/>
            <person name="Brunsveld L."/>
            <person name="Waldmann H."/>
            <person name="Goody R.S."/>
            <person name="Alexandrov K."/>
        </authorList>
    </citation>
    <scope>X-RAY CRYSTALLOGRAPHY (1.5 ANGSTROMS) IN COMPLEX WITH GDI1 AND GDP</scope>
    <scope>ISOPRENYLATION AT CYS-206</scope>
</reference>
<reference key="28">
    <citation type="journal article" date="2005" name="Nature">
        <title>Structural basis of family-wide Rab GTPase recognition by rabenosyn-5.</title>
        <authorList>
            <person name="Eathiraj S."/>
            <person name="Pan X."/>
            <person name="Ritacco C."/>
            <person name="Lambright D.G."/>
        </authorList>
    </citation>
    <scope>X-RAY CRYSTALLOGRAPHY (2.06 ANGSTROMS) OF 3-172 IN COMPLEX WITH GTP</scope>
</reference>
<reference key="29">
    <citation type="journal article" date="2006" name="EMBO J.">
        <title>Structure of doubly prenylated Ypt1:GDI complex and the mechanism of GDI-mediated Rab recycling.</title>
        <authorList>
            <person name="Pylypenko O."/>
            <person name="Rak A."/>
            <person name="Durek T."/>
            <person name="Kushnir S."/>
            <person name="Dursina B.E."/>
            <person name="Thomae N.H."/>
            <person name="Constantinescu A.T."/>
            <person name="Brunsveld L."/>
            <person name="Watzke A."/>
            <person name="Waldmann H."/>
            <person name="Goody R.S."/>
            <person name="Alexandrov K."/>
        </authorList>
    </citation>
    <scope>X-RAY CRYSTALLOGRAPHY (1.48 ANGSTROMS) IN COMPLEX WITH GDI1 AND GDP</scope>
    <scope>ISOPRENYLATION AT CYS-205 AND CYS-206</scope>
</reference>
<reference key="30">
    <citation type="journal article" date="2008" name="Cell">
        <title>The structural basis for activation of the Rab Ypt1p by the TRAPP membrane-tethering complexes.</title>
        <authorList>
            <person name="Cai Y."/>
            <person name="Chin H.F."/>
            <person name="Lazarova D."/>
            <person name="Menon S."/>
            <person name="Fu C."/>
            <person name="Cai H."/>
            <person name="Sclafani A."/>
            <person name="Rodgers D.W."/>
            <person name="De La Cruz E.M."/>
            <person name="Ferro-Novick S."/>
            <person name="Reinisch K.M."/>
        </authorList>
    </citation>
    <scope>X-RAY CRYSTALLOGRAPHY (3.70 ANGSTROMS)</scope>
</reference>
<evidence type="ECO:0000255" key="1"/>
<evidence type="ECO:0000256" key="2">
    <source>
        <dbReference type="SAM" id="MobiDB-lite"/>
    </source>
</evidence>
<evidence type="ECO:0000269" key="3">
    <source>
    </source>
</evidence>
<evidence type="ECO:0000269" key="4">
    <source>
    </source>
</evidence>
<evidence type="ECO:0000269" key="5">
    <source>
    </source>
</evidence>
<evidence type="ECO:0000269" key="6">
    <source>
    </source>
</evidence>
<evidence type="ECO:0000269" key="7">
    <source>
    </source>
</evidence>
<evidence type="ECO:0000269" key="8">
    <source>
    </source>
</evidence>
<evidence type="ECO:0000269" key="9">
    <source>
    </source>
</evidence>
<evidence type="ECO:0000269" key="10">
    <source>
    </source>
</evidence>
<evidence type="ECO:0000269" key="11">
    <source>
    </source>
</evidence>
<evidence type="ECO:0000269" key="12">
    <source>
    </source>
</evidence>
<evidence type="ECO:0000269" key="13">
    <source>
    </source>
</evidence>
<evidence type="ECO:0000269" key="14">
    <source>
    </source>
</evidence>
<evidence type="ECO:0000269" key="15">
    <source>
    </source>
</evidence>
<evidence type="ECO:0000269" key="16">
    <source>
    </source>
</evidence>
<evidence type="ECO:0000269" key="17">
    <source>
    </source>
</evidence>
<evidence type="ECO:0000269" key="18">
    <source>
    </source>
</evidence>
<evidence type="ECO:0000269" key="19">
    <source>
    </source>
</evidence>
<evidence type="ECO:0000269" key="20">
    <source>
    </source>
</evidence>
<evidence type="ECO:0000269" key="21">
    <source>
    </source>
</evidence>
<evidence type="ECO:0000269" key="22">
    <source>
    </source>
</evidence>
<evidence type="ECO:0000269" key="23">
    <source ref="5"/>
</evidence>
<evidence type="ECO:0000305" key="24"/>
<evidence type="ECO:0007744" key="25">
    <source>
        <dbReference type="PDB" id="1UKV"/>
    </source>
</evidence>
<evidence type="ECO:0007744" key="26">
    <source>
        <dbReference type="PDB" id="1YZN"/>
    </source>
</evidence>
<evidence type="ECO:0007744" key="27">
    <source>
        <dbReference type="PDB" id="2BCG"/>
    </source>
</evidence>
<evidence type="ECO:0007744" key="28">
    <source>
    </source>
</evidence>
<evidence type="ECO:0007744" key="29">
    <source>
    </source>
</evidence>
<evidence type="ECO:0007744" key="30">
    <source>
    </source>
</evidence>
<evidence type="ECO:0007829" key="31">
    <source>
        <dbReference type="PDB" id="2BCG"/>
    </source>
</evidence>
<dbReference type="EMBL" id="X00209">
    <property type="protein sequence ID" value="CAA25036.1"/>
    <property type="molecule type" value="Genomic_DNA"/>
</dbReference>
<dbReference type="EMBL" id="D50617">
    <property type="protein sequence ID" value="BAA09201.1"/>
    <property type="molecule type" value="Genomic_DNA"/>
</dbReference>
<dbReference type="EMBL" id="AY558467">
    <property type="protein sequence ID" value="AAS56793.1"/>
    <property type="molecule type" value="Genomic_DNA"/>
</dbReference>
<dbReference type="EMBL" id="BK006940">
    <property type="protein sequence ID" value="DAA12402.1"/>
    <property type="molecule type" value="Genomic_DNA"/>
</dbReference>
<dbReference type="PIR" id="S56216">
    <property type="entry name" value="TVBYQ2"/>
</dbReference>
<dbReference type="RefSeq" id="NP_116615.1">
    <property type="nucleotide sequence ID" value="NM_001179928.1"/>
</dbReference>
<dbReference type="PDB" id="1UKV">
    <property type="method" value="X-ray"/>
    <property type="resolution" value="1.50 A"/>
    <property type="chains" value="Y=1-206"/>
</dbReference>
<dbReference type="PDB" id="1YZN">
    <property type="method" value="X-ray"/>
    <property type="resolution" value="2.06 A"/>
    <property type="chains" value="A=3-172"/>
</dbReference>
<dbReference type="PDB" id="2BCG">
    <property type="method" value="X-ray"/>
    <property type="resolution" value="1.48 A"/>
    <property type="chains" value="Y=1-206"/>
</dbReference>
<dbReference type="PDB" id="3CUE">
    <property type="method" value="X-ray"/>
    <property type="resolution" value="3.70 A"/>
    <property type="chains" value="F/L/R/X=1-206"/>
</dbReference>
<dbReference type="PDB" id="7KMT">
    <property type="method" value="EM"/>
    <property type="resolution" value="3.70 A"/>
    <property type="chains" value="A=1-206"/>
</dbReference>
<dbReference type="PDBsum" id="1UKV"/>
<dbReference type="PDBsum" id="1YZN"/>
<dbReference type="PDBsum" id="2BCG"/>
<dbReference type="PDBsum" id="3CUE"/>
<dbReference type="PDBsum" id="7KMT"/>
<dbReference type="EMDB" id="EMD-22928"/>
<dbReference type="SMR" id="P01123"/>
<dbReference type="BioGRID" id="31108">
    <property type="interactions" value="457"/>
</dbReference>
<dbReference type="DIP" id="DIP-2019N"/>
<dbReference type="FunCoup" id="P01123">
    <property type="interactions" value="1401"/>
</dbReference>
<dbReference type="IntAct" id="P01123">
    <property type="interactions" value="37"/>
</dbReference>
<dbReference type="MINT" id="P01123"/>
<dbReference type="STRING" id="4932.YFL038C"/>
<dbReference type="iPTMnet" id="P01123"/>
<dbReference type="PaxDb" id="4932-YFL038C"/>
<dbReference type="PeptideAtlas" id="P01123"/>
<dbReference type="EnsemblFungi" id="YFL038C_mRNA">
    <property type="protein sequence ID" value="YFL038C"/>
    <property type="gene ID" value="YFL038C"/>
</dbReference>
<dbReference type="GeneID" id="850505"/>
<dbReference type="KEGG" id="sce:YFL038C"/>
<dbReference type="AGR" id="SGD:S000001856"/>
<dbReference type="SGD" id="S000001856">
    <property type="gene designation" value="YPT1"/>
</dbReference>
<dbReference type="VEuPathDB" id="FungiDB:YFL038C"/>
<dbReference type="eggNOG" id="KOG0084">
    <property type="taxonomic scope" value="Eukaryota"/>
</dbReference>
<dbReference type="GeneTree" id="ENSGT00940000175199"/>
<dbReference type="HOGENOM" id="CLU_041217_23_1_1"/>
<dbReference type="InParanoid" id="P01123"/>
<dbReference type="OMA" id="TQMAKDF"/>
<dbReference type="OrthoDB" id="9989112at2759"/>
<dbReference type="BioCyc" id="YEAST:G3O-30424-MONOMER"/>
<dbReference type="Reactome" id="R-SCE-162658">
    <property type="pathway name" value="Golgi Cisternae Pericentriolar Stack Reorganization"/>
</dbReference>
<dbReference type="Reactome" id="R-SCE-204005">
    <property type="pathway name" value="COPII-mediated vesicle transport"/>
</dbReference>
<dbReference type="Reactome" id="R-SCE-6807878">
    <property type="pathway name" value="COPI-mediated anterograde transport"/>
</dbReference>
<dbReference type="Reactome" id="R-SCE-6811434">
    <property type="pathway name" value="COPI-dependent Golgi-to-ER retrograde traffic"/>
</dbReference>
<dbReference type="Reactome" id="R-SCE-8873719">
    <property type="pathway name" value="RAB geranylgeranylation"/>
</dbReference>
<dbReference type="Reactome" id="R-SCE-8876198">
    <property type="pathway name" value="RAB GEFs exchange GTP for GDP on RABs"/>
</dbReference>
<dbReference type="BioGRID-ORCS" id="850505">
    <property type="hits" value="10 hits in 10 CRISPR screens"/>
</dbReference>
<dbReference type="EvolutionaryTrace" id="P01123"/>
<dbReference type="PRO" id="PR:P01123"/>
<dbReference type="Proteomes" id="UP000002311">
    <property type="component" value="Chromosome VI"/>
</dbReference>
<dbReference type="RNAct" id="P01123">
    <property type="molecule type" value="protein"/>
</dbReference>
<dbReference type="GO" id="GO:0005801">
    <property type="term" value="C:cis-Golgi network"/>
    <property type="evidence" value="ECO:0000314"/>
    <property type="project" value="SGD"/>
</dbReference>
<dbReference type="GO" id="GO:0031410">
    <property type="term" value="C:cytoplasmic vesicle"/>
    <property type="evidence" value="ECO:0000314"/>
    <property type="project" value="SGD"/>
</dbReference>
<dbReference type="GO" id="GO:0005829">
    <property type="term" value="C:cytosol"/>
    <property type="evidence" value="ECO:0007669"/>
    <property type="project" value="GOC"/>
</dbReference>
<dbReference type="GO" id="GO:0012505">
    <property type="term" value="C:endomembrane system"/>
    <property type="evidence" value="ECO:0000318"/>
    <property type="project" value="GO_Central"/>
</dbReference>
<dbReference type="GO" id="GO:0005789">
    <property type="term" value="C:endoplasmic reticulum membrane"/>
    <property type="evidence" value="ECO:0000314"/>
    <property type="project" value="SGD"/>
</dbReference>
<dbReference type="GO" id="GO:0000139">
    <property type="term" value="C:Golgi membrane"/>
    <property type="evidence" value="ECO:0000314"/>
    <property type="project" value="SGD"/>
</dbReference>
<dbReference type="GO" id="GO:0005795">
    <property type="term" value="C:Golgi stack"/>
    <property type="evidence" value="ECO:0000314"/>
    <property type="project" value="SGD"/>
</dbReference>
<dbReference type="GO" id="GO:0005739">
    <property type="term" value="C:mitochondrion"/>
    <property type="evidence" value="ECO:0007005"/>
    <property type="project" value="SGD"/>
</dbReference>
<dbReference type="GO" id="GO:0000407">
    <property type="term" value="C:phagophore assembly site"/>
    <property type="evidence" value="ECO:0000314"/>
    <property type="project" value="SGD"/>
</dbReference>
<dbReference type="GO" id="GO:0034045">
    <property type="term" value="C:phagophore assembly site membrane"/>
    <property type="evidence" value="ECO:0007669"/>
    <property type="project" value="UniProtKB-SubCell"/>
</dbReference>
<dbReference type="GO" id="GO:0005525">
    <property type="term" value="F:GTP binding"/>
    <property type="evidence" value="ECO:0007669"/>
    <property type="project" value="UniProtKB-KW"/>
</dbReference>
<dbReference type="GO" id="GO:0003924">
    <property type="term" value="F:GTPase activity"/>
    <property type="evidence" value="ECO:0000314"/>
    <property type="project" value="SGD"/>
</dbReference>
<dbReference type="GO" id="GO:0000149">
    <property type="term" value="F:SNARE binding"/>
    <property type="evidence" value="ECO:0000314"/>
    <property type="project" value="SGD"/>
</dbReference>
<dbReference type="GO" id="GO:0000045">
    <property type="term" value="P:autophagosome assembly"/>
    <property type="evidence" value="ECO:0000318"/>
    <property type="project" value="GO_Central"/>
</dbReference>
<dbReference type="GO" id="GO:0090114">
    <property type="term" value="P:COPII-coated vesicle budding"/>
    <property type="evidence" value="ECO:0000315"/>
    <property type="project" value="SGD"/>
</dbReference>
<dbReference type="GO" id="GO:0032258">
    <property type="term" value="P:cytoplasm to vacuole targeting by the Cvt pathway"/>
    <property type="evidence" value="ECO:0000315"/>
    <property type="project" value="SGD"/>
</dbReference>
<dbReference type="GO" id="GO:0034498">
    <property type="term" value="P:early endosome to Golgi transport"/>
    <property type="evidence" value="ECO:0000315"/>
    <property type="project" value="SGD"/>
</dbReference>
<dbReference type="GO" id="GO:0032456">
    <property type="term" value="P:endocytic recycling"/>
    <property type="evidence" value="ECO:0000315"/>
    <property type="project" value="SGD"/>
</dbReference>
<dbReference type="GO" id="GO:0006888">
    <property type="term" value="P:endoplasmic reticulum to Golgi vesicle-mediated transport"/>
    <property type="evidence" value="ECO:0000315"/>
    <property type="project" value="SGD"/>
</dbReference>
<dbReference type="GO" id="GO:0048194">
    <property type="term" value="P:Golgi vesicle budding"/>
    <property type="evidence" value="ECO:0000316"/>
    <property type="project" value="SGD"/>
</dbReference>
<dbReference type="GO" id="GO:0048211">
    <property type="term" value="P:Golgi vesicle docking"/>
    <property type="evidence" value="ECO:0000315"/>
    <property type="project" value="SGD"/>
</dbReference>
<dbReference type="GO" id="GO:0006886">
    <property type="term" value="P:intracellular protein transport"/>
    <property type="evidence" value="ECO:0000318"/>
    <property type="project" value="GO_Central"/>
</dbReference>
<dbReference type="GO" id="GO:0016236">
    <property type="term" value="P:macroautophagy"/>
    <property type="evidence" value="ECO:0000315"/>
    <property type="project" value="SGD"/>
</dbReference>
<dbReference type="GO" id="GO:1990261">
    <property type="term" value="P:pre-mRNA catabolic process"/>
    <property type="evidence" value="ECO:0000315"/>
    <property type="project" value="SGD"/>
</dbReference>
<dbReference type="GO" id="GO:0034497">
    <property type="term" value="P:protein localization to phagophore assembly site"/>
    <property type="evidence" value="ECO:0000315"/>
    <property type="project" value="SGD"/>
</dbReference>
<dbReference type="GO" id="GO:1900101">
    <property type="term" value="P:regulation of endoplasmic reticulum unfolded protein response"/>
    <property type="evidence" value="ECO:0000315"/>
    <property type="project" value="SGD"/>
</dbReference>
<dbReference type="GO" id="GO:0061709">
    <property type="term" value="P:reticulophagy"/>
    <property type="evidence" value="ECO:0000315"/>
    <property type="project" value="SGD"/>
</dbReference>
<dbReference type="GO" id="GO:0006890">
    <property type="term" value="P:retrograde vesicle-mediated transport, Golgi to endoplasmic reticulum"/>
    <property type="evidence" value="ECO:0000315"/>
    <property type="project" value="SGD"/>
</dbReference>
<dbReference type="GO" id="GO:0035493">
    <property type="term" value="P:SNARE complex assembly"/>
    <property type="evidence" value="ECO:0000314"/>
    <property type="project" value="SGD"/>
</dbReference>
<dbReference type="GO" id="GO:0035494">
    <property type="term" value="P:SNARE complex disassembly"/>
    <property type="evidence" value="ECO:0000315"/>
    <property type="project" value="SGD"/>
</dbReference>
<dbReference type="CDD" id="cd01869">
    <property type="entry name" value="Rab1_Ypt1"/>
    <property type="match status" value="1"/>
</dbReference>
<dbReference type="FunFam" id="3.40.50.300:FF:000359">
    <property type="entry name" value="Small GTP-binding protein"/>
    <property type="match status" value="1"/>
</dbReference>
<dbReference type="Gene3D" id="3.40.50.300">
    <property type="entry name" value="P-loop containing nucleotide triphosphate hydrolases"/>
    <property type="match status" value="1"/>
</dbReference>
<dbReference type="InterPro" id="IPR027417">
    <property type="entry name" value="P-loop_NTPase"/>
</dbReference>
<dbReference type="InterPro" id="IPR050227">
    <property type="entry name" value="Rab"/>
</dbReference>
<dbReference type="InterPro" id="IPR005225">
    <property type="entry name" value="Small_GTP-bd"/>
</dbReference>
<dbReference type="InterPro" id="IPR001806">
    <property type="entry name" value="Small_GTPase"/>
</dbReference>
<dbReference type="NCBIfam" id="TIGR00231">
    <property type="entry name" value="small_GTP"/>
    <property type="match status" value="1"/>
</dbReference>
<dbReference type="PANTHER" id="PTHR47977">
    <property type="entry name" value="RAS-RELATED PROTEIN RAB"/>
    <property type="match status" value="1"/>
</dbReference>
<dbReference type="Pfam" id="PF00071">
    <property type="entry name" value="Ras"/>
    <property type="match status" value="1"/>
</dbReference>
<dbReference type="PRINTS" id="PR00449">
    <property type="entry name" value="RASTRNSFRMNG"/>
</dbReference>
<dbReference type="SMART" id="SM00175">
    <property type="entry name" value="RAB"/>
    <property type="match status" value="1"/>
</dbReference>
<dbReference type="SMART" id="SM00176">
    <property type="entry name" value="RAN"/>
    <property type="match status" value="1"/>
</dbReference>
<dbReference type="SMART" id="SM00173">
    <property type="entry name" value="RAS"/>
    <property type="match status" value="1"/>
</dbReference>
<dbReference type="SMART" id="SM00174">
    <property type="entry name" value="RHO"/>
    <property type="match status" value="1"/>
</dbReference>
<dbReference type="SUPFAM" id="SSF52540">
    <property type="entry name" value="P-loop containing nucleoside triphosphate hydrolases"/>
    <property type="match status" value="1"/>
</dbReference>
<dbReference type="PROSITE" id="PS51419">
    <property type="entry name" value="RAB"/>
    <property type="match status" value="1"/>
</dbReference>
<sequence>MNSEYDYLFKLLLIGNSGVGKSCLLLRFSDDTYTNDYISTIGVDFKIKTVELDGKTVKLQIWDTAGQERFRTITSSYYRGSHGIIIVYDVTDQESFNGVKMWLQEIDRYATSTVLKLLVGNKCDLKDKRVVEYDVAKEFADANKMPFLETSALDSTNVEDAFLTMARQIKESMSQQNLNETTQKKEDKGNVNLKGQSLTNTGGGCC</sequence>
<name>YPT1_YEAST</name>
<feature type="chain" id="PRO_0000121318" description="GTP-binding protein YPT1">
    <location>
        <begin position="1"/>
        <end position="206"/>
    </location>
</feature>
<feature type="region of interest" description="Interaction with GDI1" evidence="11">
    <location>
        <begin position="63"/>
        <end position="80"/>
    </location>
</feature>
<feature type="region of interest" description="Disordered" evidence="2">
    <location>
        <begin position="173"/>
        <end position="206"/>
    </location>
</feature>
<feature type="region of interest" description="Interaction with GDI1" evidence="11">
    <location>
        <begin position="189"/>
        <end position="195"/>
    </location>
</feature>
<feature type="short sequence motif" description="Effector region" evidence="24">
    <location>
        <begin position="37"/>
        <end position="45"/>
    </location>
</feature>
<feature type="binding site" evidence="11 13 14 25 26 27">
    <location>
        <begin position="17"/>
        <end position="23"/>
    </location>
    <ligand>
        <name>GTP</name>
        <dbReference type="ChEBI" id="CHEBI:37565"/>
    </ligand>
</feature>
<feature type="binding site" evidence="11 13 14 25 26 27">
    <location>
        <begin position="33"/>
        <end position="40"/>
    </location>
    <ligand>
        <name>GTP</name>
        <dbReference type="ChEBI" id="CHEBI:37565"/>
    </ligand>
</feature>
<feature type="binding site" evidence="13 26">
    <location>
        <position position="66"/>
    </location>
    <ligand>
        <name>GTP</name>
        <dbReference type="ChEBI" id="CHEBI:37565"/>
    </ligand>
</feature>
<feature type="binding site" evidence="11 13 14 25 26 27">
    <location>
        <begin position="121"/>
        <end position="124"/>
    </location>
    <ligand>
        <name>GTP</name>
        <dbReference type="ChEBI" id="CHEBI:37565"/>
    </ligand>
</feature>
<feature type="binding site" evidence="11 13 14 25 26 27">
    <location>
        <begin position="152"/>
        <end position="153"/>
    </location>
    <ligand>
        <name>GTP</name>
        <dbReference type="ChEBI" id="CHEBI:37565"/>
    </ligand>
</feature>
<feature type="modified residue" description="N-acetylmethionine" evidence="23">
    <location>
        <position position="1"/>
    </location>
</feature>
<feature type="modified residue" description="Phosphoserine" evidence="29">
    <location>
        <position position="172"/>
    </location>
</feature>
<feature type="modified residue" description="Phosphoserine" evidence="28">
    <location>
        <position position="174"/>
    </location>
</feature>
<feature type="lipid moiety-binding region" description="S-palmitoyl cysteine" evidence="1">
    <location>
        <position position="23"/>
    </location>
</feature>
<feature type="lipid moiety-binding region" description="S-palmitoyl cysteine" evidence="1">
    <location>
        <position position="123"/>
    </location>
</feature>
<feature type="lipid moiety-binding region" description="S-geranylgeranyl cysteine" evidence="3 14">
    <location>
        <position position="205"/>
    </location>
</feature>
<feature type="lipid moiety-binding region" description="S-geranylgeranyl cysteine" evidence="3 11 14 25">
    <location>
        <position position="206"/>
    </location>
</feature>
<feature type="cross-link" description="Glycyl lysine isopeptide (Lys-Gly) (interchain with G-Cter in ubiquitin)" evidence="30">
    <location>
        <position position="144"/>
    </location>
</feature>
<feature type="mutagenesis site" description="Decreases GTP binding and increases GTP hydrolysis." evidence="18">
    <original>S</original>
    <variation>G</variation>
    <location>
        <position position="17"/>
    </location>
</feature>
<feature type="mutagenesis site" description="Abolishes GTP binding." evidence="18">
    <original>K</original>
    <variation>M</variation>
    <location>
        <position position="21"/>
    </location>
</feature>
<feature type="mutagenesis site" description="No change." evidence="15">
    <original>Y</original>
    <variation>F</variation>
    <location>
        <position position="37"/>
    </location>
</feature>
<feature type="mutagenesis site" description="No change." evidence="15">
    <original>S</original>
    <variation>A</variation>
    <location>
        <position position="39"/>
    </location>
</feature>
<feature type="mutagenesis site" description="No change." evidence="15">
    <original>T</original>
    <variation>S</variation>
    <location>
        <position position="40"/>
    </location>
</feature>
<feature type="mutagenesis site" description="Lethal." evidence="15">
    <original>I</original>
    <variation>M</variation>
    <location>
        <position position="41"/>
    </location>
</feature>
<feature type="mutagenesis site" description="No change." evidence="15">
    <original>V</original>
    <variation>E</variation>
    <location>
        <position position="43"/>
    </location>
</feature>
<feature type="mutagenesis site" description="Temperature-sensitive phenotype." evidence="15">
    <original>D</original>
    <variation>N</variation>
    <location>
        <position position="44"/>
    </location>
</feature>
<feature type="mutagenesis site" description="Decreases GTP binding and GTP hydrolysis." evidence="18">
    <original>A</original>
    <variation>T</variation>
    <location>
        <position position="65"/>
    </location>
</feature>
<feature type="mutagenesis site" description="Locks YPT1 in the GTP-bound form by reducing GTP hydrolysis rate 40-fold." evidence="12 21">
    <original>Q</original>
    <variation>L</variation>
    <location>
        <position position="67"/>
    </location>
</feature>
<feature type="mutagenesis site" description="Abolishes GTP binding." evidence="18">
    <original>N</original>
    <variation>I</variation>
    <location>
        <position position="121"/>
    </location>
</feature>
<feature type="mutagenesis site" description="Loss of function at 37 degrees Celsius." evidence="19">
    <original>A</original>
    <variation>D</variation>
    <location>
        <position position="136"/>
    </location>
</feature>
<feature type="mutagenesis site" description="Abolishes membrane association. Lethal; when associated with S-206." evidence="3 17">
    <original>C</original>
    <variation>S</variation>
    <location>
        <position position="205"/>
    </location>
</feature>
<feature type="mutagenesis site" description="Abolishes membrane association. Lethal; when associated with S-205." evidence="3 17">
    <original>C</original>
    <variation>S</variation>
    <location>
        <position position="206"/>
    </location>
</feature>
<feature type="strand" evidence="31">
    <location>
        <begin position="6"/>
        <end position="16"/>
    </location>
</feature>
<feature type="helix" evidence="31">
    <location>
        <begin position="21"/>
        <end position="30"/>
    </location>
</feature>
<feature type="strand" evidence="31">
    <location>
        <begin position="45"/>
        <end position="52"/>
    </location>
</feature>
<feature type="strand" evidence="31">
    <location>
        <begin position="55"/>
        <end position="62"/>
    </location>
</feature>
<feature type="turn" evidence="31">
    <location>
        <begin position="65"/>
        <end position="71"/>
    </location>
</feature>
<feature type="helix" evidence="31">
    <location>
        <begin position="75"/>
        <end position="78"/>
    </location>
</feature>
<feature type="strand" evidence="31">
    <location>
        <begin position="82"/>
        <end position="89"/>
    </location>
</feature>
<feature type="helix" evidence="31">
    <location>
        <begin position="93"/>
        <end position="109"/>
    </location>
</feature>
<feature type="strand" evidence="31">
    <location>
        <begin position="115"/>
        <end position="121"/>
    </location>
</feature>
<feature type="turn" evidence="31">
    <location>
        <begin position="126"/>
        <end position="128"/>
    </location>
</feature>
<feature type="helix" evidence="31">
    <location>
        <begin position="133"/>
        <end position="142"/>
    </location>
</feature>
<feature type="strand" evidence="31">
    <location>
        <begin position="147"/>
        <end position="149"/>
    </location>
</feature>
<feature type="turn" evidence="31">
    <location>
        <begin position="152"/>
        <end position="154"/>
    </location>
</feature>
<feature type="helix" evidence="31">
    <location>
        <begin position="158"/>
        <end position="172"/>
    </location>
</feature>
<feature type="helix" evidence="31">
    <location>
        <begin position="175"/>
        <end position="179"/>
    </location>
</feature>
<feature type="helix" evidence="31">
    <location>
        <begin position="183"/>
        <end position="185"/>
    </location>
</feature>
<accession>P01123</accession>
<accession>D6VTJ2</accession>
<proteinExistence type="evidence at protein level"/>
<organism>
    <name type="scientific">Saccharomyces cerevisiae (strain ATCC 204508 / S288c)</name>
    <name type="common">Baker's yeast</name>
    <dbReference type="NCBI Taxonomy" id="559292"/>
    <lineage>
        <taxon>Eukaryota</taxon>
        <taxon>Fungi</taxon>
        <taxon>Dikarya</taxon>
        <taxon>Ascomycota</taxon>
        <taxon>Saccharomycotina</taxon>
        <taxon>Saccharomycetes</taxon>
        <taxon>Saccharomycetales</taxon>
        <taxon>Saccharomycetaceae</taxon>
        <taxon>Saccharomyces</taxon>
    </lineage>
</organism>